<sequence length="283" mass="30011">MKLPAIRYASPASIEDACDLLSTDEDSKIIAGGQSLLPVMAMRLAQPSVVIDLGNVPGLTRLEEVGDYVRFGPMVTHATIVNSPAVAKHLPMMAAAGRHIAHPQIRNRGTLGGSLAHGDAAGEWPLVLLALNGMVEVQSVRGRRTIEADDLFVGPYMTSLAADEIITDVWIPSRPNGWGYGEFARRSGDYGLANVAVVLSTADSRISDVRIAVGGAVGKIQRVPDAEDVLNGSELSPERAEAASEAGAKSLSYISDIHGSAEYRHGLVQELIRRTIVEAGART</sequence>
<proteinExistence type="evidence at protein level"/>
<evidence type="ECO:0000250" key="1">
    <source>
        <dbReference type="UniProtKB" id="P19920"/>
    </source>
</evidence>
<evidence type="ECO:0000255" key="2">
    <source>
        <dbReference type="PROSITE-ProRule" id="PRU00718"/>
    </source>
</evidence>
<evidence type="ECO:0000269" key="3">
    <source>
    </source>
</evidence>
<evidence type="ECO:0000269" key="4">
    <source>
    </source>
</evidence>
<evidence type="ECO:0000303" key="5">
    <source>
    </source>
</evidence>
<evidence type="ECO:0000303" key="6">
    <source>
    </source>
</evidence>
<evidence type="ECO:0000303" key="7">
    <source>
    </source>
</evidence>
<evidence type="ECO:0000305" key="8"/>
<evidence type="ECO:0000305" key="9">
    <source>
    </source>
</evidence>
<evidence type="ECO:0000312" key="10">
    <source>
        <dbReference type="EMBL" id="AAK64243.1"/>
    </source>
</evidence>
<evidence type="ECO:0000312" key="11">
    <source>
        <dbReference type="EMBL" id="CAA53086.1"/>
    </source>
</evidence>
<evidence type="ECO:0000312" key="12">
    <source>
        <dbReference type="EMBL" id="CAD47954.1"/>
    </source>
</evidence>
<organism>
    <name type="scientific">Paenarthrobacter nicotinovorans</name>
    <name type="common">Arthrobacter nicotinovorans</name>
    <dbReference type="NCBI Taxonomy" id="29320"/>
    <lineage>
        <taxon>Bacteria</taxon>
        <taxon>Bacillati</taxon>
        <taxon>Actinomycetota</taxon>
        <taxon>Actinomycetes</taxon>
        <taxon>Micrococcales</taxon>
        <taxon>Micrococcaceae</taxon>
        <taxon>Paenarthrobacter</taxon>
    </lineage>
</organism>
<dbReference type="EC" id="1.5.99.4" evidence="3 4"/>
<dbReference type="EMBL" id="X75338">
    <property type="protein sequence ID" value="CAA53086.1"/>
    <property type="molecule type" value="Genomic_DNA"/>
</dbReference>
<dbReference type="EMBL" id="AF373840">
    <property type="protein sequence ID" value="AAK64243.1"/>
    <property type="molecule type" value="Genomic_DNA"/>
</dbReference>
<dbReference type="EMBL" id="AJ507836">
    <property type="protein sequence ID" value="CAD47954.1"/>
    <property type="molecule type" value="Genomic_DNA"/>
</dbReference>
<dbReference type="PIR" id="I39625">
    <property type="entry name" value="I39625"/>
</dbReference>
<dbReference type="RefSeq" id="WP_016359465.1">
    <property type="nucleotide sequence ID" value="NZ_JAGINZ010000002.1"/>
</dbReference>
<dbReference type="RefSeq" id="YP_007988780.1">
    <property type="nucleotide sequence ID" value="NC_021229.1"/>
</dbReference>
<dbReference type="SMR" id="Q59127"/>
<dbReference type="GeneID" id="84020297"/>
<dbReference type="KEGG" id="ag:CAA53086"/>
<dbReference type="BioCyc" id="MetaCyc:MONOMER-961"/>
<dbReference type="BRENDA" id="1.5.99.4">
    <property type="organism ID" value="449"/>
</dbReference>
<dbReference type="UniPathway" id="UPA00106">
    <property type="reaction ID" value="UER00487"/>
</dbReference>
<dbReference type="UniPathway" id="UPA00106">
    <property type="reaction ID" value="UER00918"/>
</dbReference>
<dbReference type="GO" id="GO:0005737">
    <property type="term" value="C:cytoplasm"/>
    <property type="evidence" value="ECO:0007669"/>
    <property type="project" value="UniProtKB-SubCell"/>
</dbReference>
<dbReference type="GO" id="GO:0071949">
    <property type="term" value="F:FAD binding"/>
    <property type="evidence" value="ECO:0007669"/>
    <property type="project" value="InterPro"/>
</dbReference>
<dbReference type="GO" id="GO:0018535">
    <property type="term" value="F:nicotine dehydrogenase activity"/>
    <property type="evidence" value="ECO:0007669"/>
    <property type="project" value="UniProtKB-EC"/>
</dbReference>
<dbReference type="GO" id="GO:0009820">
    <property type="term" value="P:alkaloid metabolic process"/>
    <property type="evidence" value="ECO:0007669"/>
    <property type="project" value="UniProtKB-KW"/>
</dbReference>
<dbReference type="GO" id="GO:0019608">
    <property type="term" value="P:nicotine catabolic process"/>
    <property type="evidence" value="ECO:0007669"/>
    <property type="project" value="UniProtKB-UniPathway"/>
</dbReference>
<dbReference type="Gene3D" id="3.30.465.10">
    <property type="match status" value="1"/>
</dbReference>
<dbReference type="Gene3D" id="3.30.390.50">
    <property type="entry name" value="CO dehydrogenase flavoprotein, C-terminal domain"/>
    <property type="match status" value="1"/>
</dbReference>
<dbReference type="Gene3D" id="3.30.43.10">
    <property type="entry name" value="Uridine Diphospho-n-acetylenolpyruvylglucosamine Reductase, domain 2"/>
    <property type="match status" value="1"/>
</dbReference>
<dbReference type="InterPro" id="IPR005107">
    <property type="entry name" value="CO_DH_flav_C"/>
</dbReference>
<dbReference type="InterPro" id="IPR036683">
    <property type="entry name" value="CO_DH_flav_C_dom_sf"/>
</dbReference>
<dbReference type="InterPro" id="IPR051312">
    <property type="entry name" value="Diverse_Substr_Oxidored"/>
</dbReference>
<dbReference type="InterPro" id="IPR016166">
    <property type="entry name" value="FAD-bd_PCMH"/>
</dbReference>
<dbReference type="InterPro" id="IPR036318">
    <property type="entry name" value="FAD-bd_PCMH-like_sf"/>
</dbReference>
<dbReference type="InterPro" id="IPR016167">
    <property type="entry name" value="FAD-bd_PCMH_sub1"/>
</dbReference>
<dbReference type="InterPro" id="IPR016169">
    <property type="entry name" value="FAD-bd_PCMH_sub2"/>
</dbReference>
<dbReference type="InterPro" id="IPR002346">
    <property type="entry name" value="Mopterin_DH_FAD-bd"/>
</dbReference>
<dbReference type="PANTHER" id="PTHR42659">
    <property type="entry name" value="XANTHINE DEHYDROGENASE SUBUNIT C-RELATED"/>
    <property type="match status" value="1"/>
</dbReference>
<dbReference type="PANTHER" id="PTHR42659:SF2">
    <property type="entry name" value="XANTHINE DEHYDROGENASE SUBUNIT C-RELATED"/>
    <property type="match status" value="1"/>
</dbReference>
<dbReference type="Pfam" id="PF03450">
    <property type="entry name" value="CO_deh_flav_C"/>
    <property type="match status" value="1"/>
</dbReference>
<dbReference type="Pfam" id="PF00941">
    <property type="entry name" value="FAD_binding_5"/>
    <property type="match status" value="1"/>
</dbReference>
<dbReference type="SMART" id="SM01092">
    <property type="entry name" value="CO_deh_flav_C"/>
    <property type="match status" value="1"/>
</dbReference>
<dbReference type="SUPFAM" id="SSF55447">
    <property type="entry name" value="CO dehydrogenase flavoprotein C-terminal domain-like"/>
    <property type="match status" value="1"/>
</dbReference>
<dbReference type="SUPFAM" id="SSF56176">
    <property type="entry name" value="FAD-binding/transporter-associated domain-like"/>
    <property type="match status" value="1"/>
</dbReference>
<dbReference type="PROSITE" id="PS51387">
    <property type="entry name" value="FAD_PCMH"/>
    <property type="match status" value="1"/>
</dbReference>
<geneLocation type="plasmid">
    <name>pAO1</name>
</geneLocation>
<gene>
    <name evidence="5" type="primary">ndhM</name>
    <name evidence="7" type="synonym">ndhA</name>
</gene>
<protein>
    <recommendedName>
        <fullName evidence="8">Nicotine 6-hydroxylase medium subunit</fullName>
        <ecNumber evidence="3 4">1.5.99.4</ecNumber>
    </recommendedName>
    <alternativeName>
        <fullName evidence="5">Nicotine dehydrogenase medium subunit</fullName>
    </alternativeName>
    <alternativeName>
        <fullName evidence="7">Nicotine dehydrogenase subunit A</fullName>
        <shortName evidence="7">NDH A</shortName>
    </alternativeName>
</protein>
<name>NDHM_PAENI</name>
<accession>Q59127</accession>
<comment type="function">
    <text evidence="3 4">Component of the nicotine 6-hydroxylase, which is involved in the degradation of nicotine (PubMed:5849820, PubMed:7815950). Catalyzes the hydroxylation of the pyridine ring at C6 to form 6-hydroxynicotine (PubMed:5849820, PubMed:7815950). Can use both L-nicotine and D-nicotine (PubMed:5849820, PubMed:7815950).</text>
</comment>
<comment type="catalytic activity">
    <reaction evidence="3 4">
        <text>(R)-nicotine + A + H2O = (R)-6-hydroxynicotine + AH2</text>
        <dbReference type="Rhea" id="RHEA:42352"/>
        <dbReference type="ChEBI" id="CHEBI:13193"/>
        <dbReference type="ChEBI" id="CHEBI:15377"/>
        <dbReference type="ChEBI" id="CHEBI:17499"/>
        <dbReference type="ChEBI" id="CHEBI:58413"/>
        <dbReference type="ChEBI" id="CHEBI:79008"/>
        <dbReference type="EC" id="1.5.99.4"/>
    </reaction>
    <physiologicalReaction direction="left-to-right" evidence="3 4">
        <dbReference type="Rhea" id="RHEA:42353"/>
    </physiologicalReaction>
</comment>
<comment type="catalytic activity">
    <reaction evidence="3 4">
        <text>(S)-nicotine + A + H2O = (S)-6-hydroxynicotine + AH2</text>
        <dbReference type="Rhea" id="RHEA:14769"/>
        <dbReference type="ChEBI" id="CHEBI:13193"/>
        <dbReference type="ChEBI" id="CHEBI:15377"/>
        <dbReference type="ChEBI" id="CHEBI:17499"/>
        <dbReference type="ChEBI" id="CHEBI:58182"/>
        <dbReference type="ChEBI" id="CHEBI:59806"/>
        <dbReference type="EC" id="1.5.99.4"/>
    </reaction>
    <physiologicalReaction direction="left-to-right" evidence="3 4">
        <dbReference type="Rhea" id="RHEA:14770"/>
    </physiologicalReaction>
</comment>
<comment type="cofactor">
    <cofactor evidence="1">
        <name>FAD</name>
        <dbReference type="ChEBI" id="CHEBI:57692"/>
    </cofactor>
    <text evidence="1">Binds 1 FAD per subunit.</text>
</comment>
<comment type="activity regulation">
    <text evidence="4">Nicotine dehydrogenase activity is inhibited by tungsten.</text>
</comment>
<comment type="pathway">
    <text evidence="9">Alkaloid degradation; nicotine degradation; 6-hydroxypseudooxynicotine from nicotine (R-isomer route): step 1/2.</text>
</comment>
<comment type="pathway">
    <text evidence="9">Alkaloid degradation; nicotine degradation; 6-hydroxypseudooxynicotine from nicotine (S-isomer route): step 1/2.</text>
</comment>
<comment type="subunit">
    <text evidence="4">Heterotrimer composed of a large subunit (NdhL), a medium subunit (NdhM) and a small subunit (NdhS).</text>
</comment>
<comment type="subcellular location">
    <subcellularLocation>
        <location evidence="4">Cytoplasm</location>
    </subcellularLocation>
    <text evidence="4">Also present in a membrane-associated form (PubMed:7815950). The presence of tungstate increases the proportion of membrane-bound enzyme (PubMed:7815950).</text>
</comment>
<comment type="induction">
    <text evidence="4">Expression requires the presence of nicotine and molybdenum.</text>
</comment>
<comment type="biotechnology">
    <text evidence="6">Due to the increased usage of tobacco products, the industry generates solid and liquid tobacco wastes containing high concentrations of nicotine, which dissolves easily in water leading to the contamination of the ground water (PubMed:24470788). Nicotine-degrading microbes can be used for bioremediation of these nicotine-polluted environments (PubMed:24470788).</text>
</comment>
<keyword id="KW-0017">Alkaloid metabolism</keyword>
<keyword id="KW-0963">Cytoplasm</keyword>
<keyword id="KW-0274">FAD</keyword>
<keyword id="KW-0285">Flavoprotein</keyword>
<keyword id="KW-0560">Oxidoreductase</keyword>
<keyword id="KW-0614">Plasmid</keyword>
<feature type="chain" id="PRO_0000459753" description="Nicotine 6-hydroxylase medium subunit">
    <location>
        <begin position="1"/>
        <end position="283"/>
    </location>
</feature>
<feature type="domain" description="FAD-binding PCMH-type" evidence="2">
    <location>
        <begin position="1"/>
        <end position="176"/>
    </location>
</feature>
<feature type="binding site" evidence="1">
    <location>
        <begin position="31"/>
        <end position="35"/>
    </location>
    <ligand>
        <name>FAD</name>
        <dbReference type="ChEBI" id="CHEBI:57692"/>
    </ligand>
</feature>
<feature type="binding site" evidence="1">
    <location>
        <begin position="110"/>
        <end position="114"/>
    </location>
    <ligand>
        <name>FAD</name>
        <dbReference type="ChEBI" id="CHEBI:57692"/>
    </ligand>
</feature>
<reference evidence="11" key="1">
    <citation type="journal article" date="1994" name="Mol. Microbiol.">
        <title>Structural analysis and molybdenum-dependent expression of the pAO1-encoded nicotine dehydrogenase genes of Arthrobacter nicotinovorans.</title>
        <authorList>
            <person name="Grether-Beck S."/>
            <person name="Igloi G.L."/>
            <person name="Pust S."/>
            <person name="Schiltz E."/>
            <person name="Decker K."/>
            <person name="Brandsch R."/>
        </authorList>
    </citation>
    <scope>NUCLEOTIDE SEQUENCE [GENOMIC DNA]</scope>
    <scope>FUNCTION</scope>
    <scope>CATALYTIC ACTIVITY</scope>
    <scope>ACTIVITY REGULATION</scope>
    <scope>SUBUNIT</scope>
    <scope>SUBCELLULAR LOCATION</scope>
    <scope>INDUCTION</scope>
</reference>
<reference evidence="10" key="2">
    <citation type="journal article" date="2001" name="J. Bacteriol.">
        <title>Gene cluster on pAO1 of Arthrobacter nicotinovorans involved in degradation of the plant alkaloid nicotine: cloning, purification, and characterization of 2,6-dihydroxypyridine 3-hydroxylase.</title>
        <authorList>
            <person name="Baitsch D."/>
            <person name="Sandu C."/>
            <person name="Brandsch R."/>
            <person name="Igloi G.L."/>
        </authorList>
    </citation>
    <scope>NUCLEOTIDE SEQUENCE [GENOMIC DNA]</scope>
    <source>
        <strain>ATCC 49919 / DSM 420 / JCM 3874 / KCTC 9902 / LMG 16253 / NBRC 15511</strain>
        <plasmid>pAO1</plasmid>
    </source>
</reference>
<reference evidence="12" key="3">
    <citation type="journal article" date="2003" name="J. Bacteriol.">
        <title>Sequence of the 165-kilobase catabolic plasmid pAO1 from Arthrobacter nicotinovorans and identification of a pAO1-dependent nicotine uptake system.</title>
        <authorList>
            <person name="Igloi G.L."/>
            <person name="Brandsch R."/>
        </authorList>
    </citation>
    <scope>NUCLEOTIDE SEQUENCE [LARGE SCALE GENOMIC DNA]</scope>
    <source>
        <strain>ATCC 49919 / DSM 420 / JCM 3874 / KCTC 9902 / LMG 16253 / NBRC 15511</strain>
        <plasmid>pAO1</plasmid>
    </source>
</reference>
<reference key="4">
    <citation type="journal article" date="1965" name="Biochim. Biophys. Acta">
        <title>Induction and purification of stereospecific nicotine oxidizing enzymes from Arthrobacter oxidans.</title>
        <authorList>
            <person name="Decker K."/>
            <person name="Bleeg H."/>
        </authorList>
    </citation>
    <scope>FUNCTION</scope>
    <scope>CATALYTIC ACTIVITY</scope>
</reference>
<reference key="5">
    <citation type="journal article" date="2013" name="ScientificWorldJournal">
        <title>Current status on biochemistry and molecular biology of microbial degradation of nicotine.</title>
        <authorList>
            <person name="Gurusamy R."/>
            <person name="Natarajan S."/>
        </authorList>
    </citation>
    <scope>BIOTECHNOLOGY</scope>
    <scope>REVIEW</scope>
</reference>